<comment type="function">
    <text evidence="1">Essential for recycling GMP and indirectly, cGMP.</text>
</comment>
<comment type="catalytic activity">
    <reaction evidence="1">
        <text>GMP + ATP = GDP + ADP</text>
        <dbReference type="Rhea" id="RHEA:20780"/>
        <dbReference type="ChEBI" id="CHEBI:30616"/>
        <dbReference type="ChEBI" id="CHEBI:58115"/>
        <dbReference type="ChEBI" id="CHEBI:58189"/>
        <dbReference type="ChEBI" id="CHEBI:456216"/>
        <dbReference type="EC" id="2.7.4.8"/>
    </reaction>
</comment>
<comment type="subcellular location">
    <subcellularLocation>
        <location evidence="1">Cytoplasm</location>
    </subcellularLocation>
</comment>
<comment type="similarity">
    <text evidence="1">Belongs to the guanylate kinase family.</text>
</comment>
<dbReference type="EC" id="2.7.4.8" evidence="1"/>
<dbReference type="EMBL" id="AJ938182">
    <property type="protein sequence ID" value="CAI80762.1"/>
    <property type="molecule type" value="Genomic_DNA"/>
</dbReference>
<dbReference type="RefSeq" id="WP_000368225.1">
    <property type="nucleotide sequence ID" value="NC_007622.1"/>
</dbReference>
<dbReference type="SMR" id="Q2YXF9"/>
<dbReference type="KEGG" id="sab:SAB1073"/>
<dbReference type="HOGENOM" id="CLU_001715_1_2_9"/>
<dbReference type="GO" id="GO:0005829">
    <property type="term" value="C:cytosol"/>
    <property type="evidence" value="ECO:0007669"/>
    <property type="project" value="TreeGrafter"/>
</dbReference>
<dbReference type="GO" id="GO:0005524">
    <property type="term" value="F:ATP binding"/>
    <property type="evidence" value="ECO:0007669"/>
    <property type="project" value="UniProtKB-UniRule"/>
</dbReference>
<dbReference type="GO" id="GO:0004385">
    <property type="term" value="F:guanylate kinase activity"/>
    <property type="evidence" value="ECO:0007669"/>
    <property type="project" value="UniProtKB-UniRule"/>
</dbReference>
<dbReference type="CDD" id="cd00071">
    <property type="entry name" value="GMPK"/>
    <property type="match status" value="1"/>
</dbReference>
<dbReference type="FunFam" id="3.40.50.300:FF:000855">
    <property type="entry name" value="Guanylate kinase"/>
    <property type="match status" value="1"/>
</dbReference>
<dbReference type="FunFam" id="3.30.63.10:FF:000002">
    <property type="entry name" value="Guanylate kinase 1"/>
    <property type="match status" value="1"/>
</dbReference>
<dbReference type="Gene3D" id="3.30.63.10">
    <property type="entry name" value="Guanylate Kinase phosphate binding domain"/>
    <property type="match status" value="1"/>
</dbReference>
<dbReference type="Gene3D" id="3.40.50.300">
    <property type="entry name" value="P-loop containing nucleotide triphosphate hydrolases"/>
    <property type="match status" value="1"/>
</dbReference>
<dbReference type="HAMAP" id="MF_00328">
    <property type="entry name" value="Guanylate_kinase"/>
    <property type="match status" value="1"/>
</dbReference>
<dbReference type="InterPro" id="IPR008145">
    <property type="entry name" value="GK/Ca_channel_bsu"/>
</dbReference>
<dbReference type="InterPro" id="IPR008144">
    <property type="entry name" value="Guanylate_kin-like_dom"/>
</dbReference>
<dbReference type="InterPro" id="IPR017665">
    <property type="entry name" value="Guanylate_kinase"/>
</dbReference>
<dbReference type="InterPro" id="IPR020590">
    <property type="entry name" value="Guanylate_kinase_CS"/>
</dbReference>
<dbReference type="InterPro" id="IPR027417">
    <property type="entry name" value="P-loop_NTPase"/>
</dbReference>
<dbReference type="NCBIfam" id="TIGR03263">
    <property type="entry name" value="guanyl_kin"/>
    <property type="match status" value="1"/>
</dbReference>
<dbReference type="PANTHER" id="PTHR23117:SF13">
    <property type="entry name" value="GUANYLATE KINASE"/>
    <property type="match status" value="1"/>
</dbReference>
<dbReference type="PANTHER" id="PTHR23117">
    <property type="entry name" value="GUANYLATE KINASE-RELATED"/>
    <property type="match status" value="1"/>
</dbReference>
<dbReference type="Pfam" id="PF00625">
    <property type="entry name" value="Guanylate_kin"/>
    <property type="match status" value="1"/>
</dbReference>
<dbReference type="SMART" id="SM00072">
    <property type="entry name" value="GuKc"/>
    <property type="match status" value="1"/>
</dbReference>
<dbReference type="SUPFAM" id="SSF52540">
    <property type="entry name" value="P-loop containing nucleoside triphosphate hydrolases"/>
    <property type="match status" value="1"/>
</dbReference>
<dbReference type="PROSITE" id="PS00856">
    <property type="entry name" value="GUANYLATE_KINASE_1"/>
    <property type="match status" value="1"/>
</dbReference>
<dbReference type="PROSITE" id="PS50052">
    <property type="entry name" value="GUANYLATE_KINASE_2"/>
    <property type="match status" value="1"/>
</dbReference>
<accession>Q2YXF9</accession>
<name>KGUA_STAAB</name>
<reference key="1">
    <citation type="journal article" date="2007" name="PLoS ONE">
        <title>Molecular correlates of host specialization in Staphylococcus aureus.</title>
        <authorList>
            <person name="Herron-Olson L."/>
            <person name="Fitzgerald J.R."/>
            <person name="Musser J.M."/>
            <person name="Kapur V."/>
        </authorList>
    </citation>
    <scope>NUCLEOTIDE SEQUENCE [LARGE SCALE GENOMIC DNA]</scope>
    <source>
        <strain>bovine RF122 / ET3-1</strain>
    </source>
</reference>
<feature type="chain" id="PRO_0000266407" description="Guanylate kinase">
    <location>
        <begin position="1"/>
        <end position="207"/>
    </location>
</feature>
<feature type="domain" description="Guanylate kinase-like" evidence="1">
    <location>
        <begin position="6"/>
        <end position="185"/>
    </location>
</feature>
<feature type="binding site" evidence="1">
    <location>
        <begin position="13"/>
        <end position="20"/>
    </location>
    <ligand>
        <name>ATP</name>
        <dbReference type="ChEBI" id="CHEBI:30616"/>
    </ligand>
</feature>
<protein>
    <recommendedName>
        <fullName evidence="1">Guanylate kinase</fullName>
        <ecNumber evidence="1">2.7.4.8</ecNumber>
    </recommendedName>
    <alternativeName>
        <fullName evidence="1">GMP kinase</fullName>
    </alternativeName>
</protein>
<proteinExistence type="inferred from homology"/>
<sequence>MDNEKGLLIVLSGPSGVGKGTVRKRIFEDPSTSYKYSISMTTRQMREGEVDGVDYFFKTRDAFEALIKDDQFIEYAEYVGNYYGTPVQYVKDTMDEGHDVFLEIEVEGAKQVRKKFPDALFIFLAPPSLDHLRERLVGRGTESDEKIQSRINEARKEVEMMNLYDYVVVNDEVELAKNRIQCIVEAEHLKRERVEAKYRKMILEAKK</sequence>
<evidence type="ECO:0000255" key="1">
    <source>
        <dbReference type="HAMAP-Rule" id="MF_00328"/>
    </source>
</evidence>
<organism>
    <name type="scientific">Staphylococcus aureus (strain bovine RF122 / ET3-1)</name>
    <dbReference type="NCBI Taxonomy" id="273036"/>
    <lineage>
        <taxon>Bacteria</taxon>
        <taxon>Bacillati</taxon>
        <taxon>Bacillota</taxon>
        <taxon>Bacilli</taxon>
        <taxon>Bacillales</taxon>
        <taxon>Staphylococcaceae</taxon>
        <taxon>Staphylococcus</taxon>
    </lineage>
</organism>
<keyword id="KW-0067">ATP-binding</keyword>
<keyword id="KW-0963">Cytoplasm</keyword>
<keyword id="KW-0418">Kinase</keyword>
<keyword id="KW-0547">Nucleotide-binding</keyword>
<keyword id="KW-0808">Transferase</keyword>
<gene>
    <name evidence="1" type="primary">gmk</name>
    <name type="ordered locus">SAB1073</name>
</gene>